<keyword id="KW-0143">Chaperone</keyword>
<keyword id="KW-0963">Cytoplasm</keyword>
<keyword id="KW-1185">Reference proteome</keyword>
<keyword id="KW-0346">Stress response</keyword>
<protein>
    <recommendedName>
        <fullName evidence="1">Protein GrpE</fullName>
    </recommendedName>
    <alternativeName>
        <fullName evidence="1">HSP-70 cofactor</fullName>
    </alternativeName>
</protein>
<evidence type="ECO:0000255" key="1">
    <source>
        <dbReference type="HAMAP-Rule" id="MF_01151"/>
    </source>
</evidence>
<evidence type="ECO:0000256" key="2">
    <source>
        <dbReference type="SAM" id="MobiDB-lite"/>
    </source>
</evidence>
<name>GRPE_COPPD</name>
<gene>
    <name evidence="1" type="primary">grpE</name>
    <name type="ordered locus">COPRO5265_1107</name>
</gene>
<organism>
    <name type="scientific">Coprothermobacter proteolyticus (strain ATCC 35245 / DSM 5265 / OCM 4 / BT)</name>
    <dbReference type="NCBI Taxonomy" id="309798"/>
    <lineage>
        <taxon>Bacteria</taxon>
        <taxon>Pseudomonadati</taxon>
        <taxon>Coprothermobacterota</taxon>
        <taxon>Coprothermobacteria</taxon>
        <taxon>Coprothermobacterales</taxon>
        <taxon>Coprothermobacteraceae</taxon>
        <taxon>Coprothermobacter</taxon>
    </lineage>
</organism>
<sequence>MDDKQKTNEEVKASSFDSEKSSKNQAFENTEEPAEGFQNVQHDNGSNPAQKQNSEAKEASKDQTNTNNNELSKKLEQLETERLTLQEKIAVLEQQHRELEEFLLKMKHEFALAKEALKRDQEKKERLLAESMARDLFPILDTLDHALEHDGENNGLRLIRSQLVSVLEKYGVVEVGKEGEVFDPNWHEFLGYAEGPENKIIKVVRKGYKIGDTLLRPALVVIGKESSC</sequence>
<accession>B5Y9H0</accession>
<comment type="function">
    <text evidence="1">Participates actively in the response to hyperosmotic and heat shock by preventing the aggregation of stress-denatured proteins, in association with DnaK and GrpE. It is the nucleotide exchange factor for DnaK and may function as a thermosensor. Unfolded proteins bind initially to DnaJ; upon interaction with the DnaJ-bound protein, DnaK hydrolyzes its bound ATP, resulting in the formation of a stable complex. GrpE releases ADP from DnaK; ATP binding to DnaK triggers the release of the substrate protein, thus completing the reaction cycle. Several rounds of ATP-dependent interactions between DnaJ, DnaK and GrpE are required for fully efficient folding.</text>
</comment>
<comment type="subunit">
    <text evidence="1">Homodimer.</text>
</comment>
<comment type="subcellular location">
    <subcellularLocation>
        <location evidence="1">Cytoplasm</location>
    </subcellularLocation>
</comment>
<comment type="similarity">
    <text evidence="1">Belongs to the GrpE family.</text>
</comment>
<reference key="1">
    <citation type="submission" date="2008-08" db="EMBL/GenBank/DDBJ databases">
        <title>The complete genome sequence of Coprothermobacter proteolyticus strain ATCC 5245 / DSM 5265 / BT.</title>
        <authorList>
            <person name="Dodson R.J."/>
            <person name="Durkin A.S."/>
            <person name="Wu M."/>
            <person name="Eisen J."/>
            <person name="Sutton G."/>
        </authorList>
    </citation>
    <scope>NUCLEOTIDE SEQUENCE [LARGE SCALE GENOMIC DNA]</scope>
    <source>
        <strain>ATCC 35245 / DSM 5265 / OCM 4 / BT</strain>
    </source>
</reference>
<proteinExistence type="inferred from homology"/>
<feature type="chain" id="PRO_1000164185" description="Protein GrpE">
    <location>
        <begin position="1"/>
        <end position="228"/>
    </location>
</feature>
<feature type="region of interest" description="Disordered" evidence="2">
    <location>
        <begin position="1"/>
        <end position="71"/>
    </location>
</feature>
<feature type="compositionally biased region" description="Basic and acidic residues" evidence="2">
    <location>
        <begin position="1"/>
        <end position="22"/>
    </location>
</feature>
<feature type="compositionally biased region" description="Polar residues" evidence="2">
    <location>
        <begin position="38"/>
        <end position="53"/>
    </location>
</feature>
<dbReference type="EMBL" id="CP001145">
    <property type="protein sequence ID" value="ACI17879.1"/>
    <property type="molecule type" value="Genomic_DNA"/>
</dbReference>
<dbReference type="RefSeq" id="WP_012544530.1">
    <property type="nucleotide sequence ID" value="NC_011295.1"/>
</dbReference>
<dbReference type="SMR" id="B5Y9H0"/>
<dbReference type="STRING" id="309798.COPRO5265_1107"/>
<dbReference type="KEGG" id="cpo:COPRO5265_1107"/>
<dbReference type="eggNOG" id="COG0576">
    <property type="taxonomic scope" value="Bacteria"/>
</dbReference>
<dbReference type="HOGENOM" id="CLU_057217_5_2_9"/>
<dbReference type="OrthoDB" id="9812586at2"/>
<dbReference type="Proteomes" id="UP000001732">
    <property type="component" value="Chromosome"/>
</dbReference>
<dbReference type="GO" id="GO:0005737">
    <property type="term" value="C:cytoplasm"/>
    <property type="evidence" value="ECO:0007669"/>
    <property type="project" value="UniProtKB-SubCell"/>
</dbReference>
<dbReference type="GO" id="GO:0000774">
    <property type="term" value="F:adenyl-nucleotide exchange factor activity"/>
    <property type="evidence" value="ECO:0007669"/>
    <property type="project" value="InterPro"/>
</dbReference>
<dbReference type="GO" id="GO:0042803">
    <property type="term" value="F:protein homodimerization activity"/>
    <property type="evidence" value="ECO:0007669"/>
    <property type="project" value="InterPro"/>
</dbReference>
<dbReference type="GO" id="GO:0051087">
    <property type="term" value="F:protein-folding chaperone binding"/>
    <property type="evidence" value="ECO:0007669"/>
    <property type="project" value="InterPro"/>
</dbReference>
<dbReference type="GO" id="GO:0051082">
    <property type="term" value="F:unfolded protein binding"/>
    <property type="evidence" value="ECO:0007669"/>
    <property type="project" value="TreeGrafter"/>
</dbReference>
<dbReference type="GO" id="GO:0006457">
    <property type="term" value="P:protein folding"/>
    <property type="evidence" value="ECO:0007669"/>
    <property type="project" value="InterPro"/>
</dbReference>
<dbReference type="CDD" id="cd00446">
    <property type="entry name" value="GrpE"/>
    <property type="match status" value="1"/>
</dbReference>
<dbReference type="Gene3D" id="3.90.20.20">
    <property type="match status" value="1"/>
</dbReference>
<dbReference type="Gene3D" id="2.30.22.10">
    <property type="entry name" value="Head domain of nucleotide exchange factor GrpE"/>
    <property type="match status" value="1"/>
</dbReference>
<dbReference type="HAMAP" id="MF_01151">
    <property type="entry name" value="GrpE"/>
    <property type="match status" value="1"/>
</dbReference>
<dbReference type="InterPro" id="IPR000740">
    <property type="entry name" value="GrpE"/>
</dbReference>
<dbReference type="InterPro" id="IPR013805">
    <property type="entry name" value="GrpE_coiled_coil"/>
</dbReference>
<dbReference type="InterPro" id="IPR009012">
    <property type="entry name" value="GrpE_head"/>
</dbReference>
<dbReference type="PANTHER" id="PTHR21237">
    <property type="entry name" value="GRPE PROTEIN"/>
    <property type="match status" value="1"/>
</dbReference>
<dbReference type="PANTHER" id="PTHR21237:SF23">
    <property type="entry name" value="GRPE PROTEIN HOMOLOG, MITOCHONDRIAL"/>
    <property type="match status" value="1"/>
</dbReference>
<dbReference type="Pfam" id="PF01025">
    <property type="entry name" value="GrpE"/>
    <property type="match status" value="1"/>
</dbReference>
<dbReference type="PRINTS" id="PR00773">
    <property type="entry name" value="GRPEPROTEIN"/>
</dbReference>
<dbReference type="SUPFAM" id="SSF58014">
    <property type="entry name" value="Coiled-coil domain of nucleotide exchange factor GrpE"/>
    <property type="match status" value="1"/>
</dbReference>
<dbReference type="SUPFAM" id="SSF51064">
    <property type="entry name" value="Head domain of nucleotide exchange factor GrpE"/>
    <property type="match status" value="1"/>
</dbReference>